<keyword id="KW-0067">ATP-binding</keyword>
<keyword id="KW-0963">Cytoplasm</keyword>
<keyword id="KW-0418">Kinase</keyword>
<keyword id="KW-0547">Nucleotide-binding</keyword>
<keyword id="KW-0539">Nucleus</keyword>
<keyword id="KW-1185">Reference proteome</keyword>
<keyword id="KW-0723">Serine/threonine-protein kinase</keyword>
<keyword id="KW-0808">Transferase</keyword>
<proteinExistence type="evidence at transcript level"/>
<name>CDKL2_RABIT</name>
<feature type="chain" id="PRO_0000085818" description="Cyclin-dependent kinase-like 2">
    <location>
        <begin position="1"/>
        <end position="566"/>
    </location>
</feature>
<feature type="domain" description="Protein kinase" evidence="2">
    <location>
        <begin position="4"/>
        <end position="287"/>
    </location>
</feature>
<feature type="region of interest" description="Disordered" evidence="4">
    <location>
        <begin position="307"/>
        <end position="334"/>
    </location>
</feature>
<feature type="region of interest" description="Disordered" evidence="4">
    <location>
        <begin position="545"/>
        <end position="566"/>
    </location>
</feature>
<feature type="short sequence motif" description="[NKR]KIAxRE">
    <location>
        <begin position="45"/>
        <end position="51"/>
    </location>
</feature>
<feature type="compositionally biased region" description="Basic and acidic residues" evidence="4">
    <location>
        <begin position="320"/>
        <end position="334"/>
    </location>
</feature>
<feature type="active site" description="Proton acceptor" evidence="2 3">
    <location>
        <position position="126"/>
    </location>
</feature>
<feature type="binding site" evidence="2">
    <location>
        <begin position="10"/>
        <end position="18"/>
    </location>
    <ligand>
        <name>ATP</name>
        <dbReference type="ChEBI" id="CHEBI:30616"/>
    </ligand>
</feature>
<feature type="binding site" evidence="2">
    <location>
        <position position="33"/>
    </location>
    <ligand>
        <name>ATP</name>
        <dbReference type="ChEBI" id="CHEBI:30616"/>
    </ligand>
</feature>
<dbReference type="EC" id="2.7.11.22"/>
<dbReference type="EMBL" id="AB029045">
    <property type="protein sequence ID" value="BAA88508.1"/>
    <property type="molecule type" value="mRNA"/>
</dbReference>
<dbReference type="RefSeq" id="NP_001075468.1">
    <property type="nucleotide sequence ID" value="NM_001081999.1"/>
</dbReference>
<dbReference type="SMR" id="Q9TTK0"/>
<dbReference type="FunCoup" id="Q9TTK0">
    <property type="interactions" value="399"/>
</dbReference>
<dbReference type="STRING" id="9986.ENSOCUP00000002825"/>
<dbReference type="PaxDb" id="9986-ENSOCUP00000002825"/>
<dbReference type="GeneID" id="100008614"/>
<dbReference type="KEGG" id="ocu:100008614"/>
<dbReference type="CTD" id="8999"/>
<dbReference type="eggNOG" id="KOG0593">
    <property type="taxonomic scope" value="Eukaryota"/>
</dbReference>
<dbReference type="InParanoid" id="Q9TTK0"/>
<dbReference type="OrthoDB" id="548217at2759"/>
<dbReference type="Proteomes" id="UP000001811">
    <property type="component" value="Unplaced"/>
</dbReference>
<dbReference type="GO" id="GO:0005737">
    <property type="term" value="C:cytoplasm"/>
    <property type="evidence" value="ECO:0007669"/>
    <property type="project" value="UniProtKB-SubCell"/>
</dbReference>
<dbReference type="GO" id="GO:0005634">
    <property type="term" value="C:nucleus"/>
    <property type="evidence" value="ECO:0007669"/>
    <property type="project" value="UniProtKB-SubCell"/>
</dbReference>
<dbReference type="GO" id="GO:0005524">
    <property type="term" value="F:ATP binding"/>
    <property type="evidence" value="ECO:0007669"/>
    <property type="project" value="UniProtKB-KW"/>
</dbReference>
<dbReference type="GO" id="GO:0004693">
    <property type="term" value="F:cyclin-dependent protein serine/threonine kinase activity"/>
    <property type="evidence" value="ECO:0007669"/>
    <property type="project" value="UniProtKB-EC"/>
</dbReference>
<dbReference type="GO" id="GO:0106310">
    <property type="term" value="F:protein serine kinase activity"/>
    <property type="evidence" value="ECO:0007669"/>
    <property type="project" value="RHEA"/>
</dbReference>
<dbReference type="CDD" id="cd07846">
    <property type="entry name" value="STKc_CDKL2_3"/>
    <property type="match status" value="1"/>
</dbReference>
<dbReference type="FunFam" id="3.30.200.20:FF:000049">
    <property type="entry name" value="cyclin-dependent kinase-like 1 isoform X1"/>
    <property type="match status" value="1"/>
</dbReference>
<dbReference type="FunFam" id="1.10.510.10:FF:000261">
    <property type="entry name" value="cyclin-dependent kinase-like 2 isoform X2"/>
    <property type="match status" value="1"/>
</dbReference>
<dbReference type="Gene3D" id="3.30.200.20">
    <property type="entry name" value="Phosphorylase Kinase, domain 1"/>
    <property type="match status" value="1"/>
</dbReference>
<dbReference type="Gene3D" id="1.10.510.10">
    <property type="entry name" value="Transferase(Phosphotransferase) domain 1"/>
    <property type="match status" value="1"/>
</dbReference>
<dbReference type="InterPro" id="IPR050108">
    <property type="entry name" value="CDK"/>
</dbReference>
<dbReference type="InterPro" id="IPR011009">
    <property type="entry name" value="Kinase-like_dom_sf"/>
</dbReference>
<dbReference type="InterPro" id="IPR000719">
    <property type="entry name" value="Prot_kinase_dom"/>
</dbReference>
<dbReference type="InterPro" id="IPR017441">
    <property type="entry name" value="Protein_kinase_ATP_BS"/>
</dbReference>
<dbReference type="InterPro" id="IPR008271">
    <property type="entry name" value="Ser/Thr_kinase_AS"/>
</dbReference>
<dbReference type="PANTHER" id="PTHR24056">
    <property type="entry name" value="CELL DIVISION PROTEIN KINASE"/>
    <property type="match status" value="1"/>
</dbReference>
<dbReference type="PANTHER" id="PTHR24056:SF241">
    <property type="entry name" value="CYCLIN-DEPENDENT KINASE-LIKE 2"/>
    <property type="match status" value="1"/>
</dbReference>
<dbReference type="Pfam" id="PF00069">
    <property type="entry name" value="Pkinase"/>
    <property type="match status" value="1"/>
</dbReference>
<dbReference type="SMART" id="SM00220">
    <property type="entry name" value="S_TKc"/>
    <property type="match status" value="1"/>
</dbReference>
<dbReference type="SUPFAM" id="SSF56112">
    <property type="entry name" value="Protein kinase-like (PK-like)"/>
    <property type="match status" value="1"/>
</dbReference>
<dbReference type="PROSITE" id="PS00107">
    <property type="entry name" value="PROTEIN_KINASE_ATP"/>
    <property type="match status" value="1"/>
</dbReference>
<dbReference type="PROSITE" id="PS50011">
    <property type="entry name" value="PROTEIN_KINASE_DOM"/>
    <property type="match status" value="1"/>
</dbReference>
<dbReference type="PROSITE" id="PS00108">
    <property type="entry name" value="PROTEIN_KINASE_ST"/>
    <property type="match status" value="1"/>
</dbReference>
<comment type="catalytic activity">
    <reaction>
        <text>L-seryl-[protein] + ATP = O-phospho-L-seryl-[protein] + ADP + H(+)</text>
        <dbReference type="Rhea" id="RHEA:17989"/>
        <dbReference type="Rhea" id="RHEA-COMP:9863"/>
        <dbReference type="Rhea" id="RHEA-COMP:11604"/>
        <dbReference type="ChEBI" id="CHEBI:15378"/>
        <dbReference type="ChEBI" id="CHEBI:29999"/>
        <dbReference type="ChEBI" id="CHEBI:30616"/>
        <dbReference type="ChEBI" id="CHEBI:83421"/>
        <dbReference type="ChEBI" id="CHEBI:456216"/>
        <dbReference type="EC" id="2.7.11.22"/>
    </reaction>
</comment>
<comment type="catalytic activity">
    <reaction>
        <text>L-threonyl-[protein] + ATP = O-phospho-L-threonyl-[protein] + ADP + H(+)</text>
        <dbReference type="Rhea" id="RHEA:46608"/>
        <dbReference type="Rhea" id="RHEA-COMP:11060"/>
        <dbReference type="Rhea" id="RHEA-COMP:11605"/>
        <dbReference type="ChEBI" id="CHEBI:15378"/>
        <dbReference type="ChEBI" id="CHEBI:30013"/>
        <dbReference type="ChEBI" id="CHEBI:30616"/>
        <dbReference type="ChEBI" id="CHEBI:61977"/>
        <dbReference type="ChEBI" id="CHEBI:456216"/>
        <dbReference type="EC" id="2.7.11.22"/>
    </reaction>
</comment>
<comment type="subcellular location">
    <subcellularLocation>
        <location>Cytoplasm</location>
    </subcellularLocation>
    <subcellularLocation>
        <location>Nucleus</location>
    </subcellularLocation>
</comment>
<comment type="domain">
    <text>The [NKR]KIAxRE motif seems to be a cyclin-binding region.</text>
</comment>
<comment type="similarity">
    <text evidence="5">Belongs to the protein kinase superfamily. CMGC Ser/Thr protein kinase family. CDC2/CDKX subfamily.</text>
</comment>
<reference key="1">
    <citation type="journal article" date="1999" name="J. Neurosci.">
        <title>Learning induces a CDC2-related protein kinase, KKIAMRE.</title>
        <authorList>
            <person name="Gomi H."/>
            <person name="Sun W."/>
            <person name="Finch C.E."/>
            <person name="Itohara S."/>
            <person name="Yoshimi K."/>
            <person name="Thompson R.F."/>
        </authorList>
    </citation>
    <scope>NUCLEOTIDE SEQUENCE [MRNA]</scope>
    <source>
        <tissue>Brain</tissue>
    </source>
</reference>
<organism>
    <name type="scientific">Oryctolagus cuniculus</name>
    <name type="common">Rabbit</name>
    <dbReference type="NCBI Taxonomy" id="9986"/>
    <lineage>
        <taxon>Eukaryota</taxon>
        <taxon>Metazoa</taxon>
        <taxon>Chordata</taxon>
        <taxon>Craniata</taxon>
        <taxon>Vertebrata</taxon>
        <taxon>Euteleostomi</taxon>
        <taxon>Mammalia</taxon>
        <taxon>Eutheria</taxon>
        <taxon>Euarchontoglires</taxon>
        <taxon>Glires</taxon>
        <taxon>Lagomorpha</taxon>
        <taxon>Leporidae</taxon>
        <taxon>Oryctolagus</taxon>
    </lineage>
</organism>
<sequence length="566" mass="64053">MEKYENLGLVGEGSYGMVMKCRNKDSGRIVAIKKFLESDDDKMVKKIAMREIKLLKQLRHENLVNLLEVCKKKKRWYLVFEFVDHTILDDLELFPNGLDDQVVQKYLFQIINGIGFCHSHNIIHRDIKPENILVSQSGVVKLCDFGFARTLAAPGEVYTDYVATRWYRAPELLVGDVKYGKAVDVWAIGCLVTEMLMGEPLFPGDSDIDQLYLIMRCLGNLIPRHQELFYKNPVFAGVRLPEIKESEPLERRYPKLSEVVIDLAKKCLHVDPDKRPFCAELLHHDFFQMDGFAERFSQELQMKVQKDARNISLSKKSQNRKKEKEKDDSLGEERKTLVVQDTNVDSKFKDSKVFKIKGSKIDGEKVDKGNRAAVSMTVGPSHIKAVPSTSLRDCSNVSVDHTRNPGMAIPPLTHNLSAVAPGINSGMGTIPGVQSYRVDEKTKKYCIPFVKPNKHSPSGIYNMNVTTSVSSEKNLLQANKKRGEYSKTDVRLPELNYNHLPELRALEGIARNSRLIRKENKILSESRIPSLAAIDLHTPNIAVHQVSGSPLSDGSEADSPWMEHQH</sequence>
<protein>
    <recommendedName>
        <fullName evidence="1">Cyclin-dependent kinase-like 2</fullName>
        <ecNumber>2.7.11.22</ecNumber>
    </recommendedName>
    <alternativeName>
        <fullName>Serine/threonine-protein kinase KKIAMRE</fullName>
    </alternativeName>
</protein>
<gene>
    <name evidence="1" type="primary">CDKL2</name>
</gene>
<accession>Q9TTK0</accession>
<evidence type="ECO:0000250" key="1">
    <source>
        <dbReference type="UniProtKB" id="Q92772"/>
    </source>
</evidence>
<evidence type="ECO:0000255" key="2">
    <source>
        <dbReference type="PROSITE-ProRule" id="PRU00159"/>
    </source>
</evidence>
<evidence type="ECO:0000255" key="3">
    <source>
        <dbReference type="PROSITE-ProRule" id="PRU10027"/>
    </source>
</evidence>
<evidence type="ECO:0000256" key="4">
    <source>
        <dbReference type="SAM" id="MobiDB-lite"/>
    </source>
</evidence>
<evidence type="ECO:0000305" key="5"/>